<organism>
    <name type="scientific">Euglena granulata</name>
    <dbReference type="NCBI Taxonomy" id="69255"/>
    <lineage>
        <taxon>Eukaryota</taxon>
        <taxon>Discoba</taxon>
        <taxon>Euglenozoa</taxon>
        <taxon>Euglenida</taxon>
        <taxon>Spirocuta</taxon>
        <taxon>Euglenophyceae</taxon>
        <taxon>Euglenales</taxon>
        <taxon>Euglenaceae</taxon>
        <taxon>Euglena</taxon>
    </lineage>
</organism>
<reference key="1">
    <citation type="journal article" date="2002" name="Nucleic Acids Res.">
        <title>Identification and comparative analysis of the chloroplast alpha-subunit gene of DNA-dependent RNA polymerase from seven Euglena species.</title>
        <authorList>
            <person name="Sheveleva E.V."/>
            <person name="Giordani N.V."/>
            <person name="Hallick R.B."/>
        </authorList>
    </citation>
    <scope>NUCLEOTIDE SEQUENCE [GENOMIC DNA]</scope>
    <source>
        <strain>UTEX 453</strain>
    </source>
</reference>
<evidence type="ECO:0000250" key="1"/>
<evidence type="ECO:0000305" key="2"/>
<accession>Q8SL92</accession>
<comment type="function">
    <text evidence="1">DNA-dependent RNA polymerase catalyzes the transcription of DNA into RNA using the four ribonucleoside triphosphates as substrates.</text>
</comment>
<comment type="catalytic activity">
    <reaction>
        <text>RNA(n) + a ribonucleoside 5'-triphosphate = RNA(n+1) + diphosphate</text>
        <dbReference type="Rhea" id="RHEA:21248"/>
        <dbReference type="Rhea" id="RHEA-COMP:14527"/>
        <dbReference type="Rhea" id="RHEA-COMP:17342"/>
        <dbReference type="ChEBI" id="CHEBI:33019"/>
        <dbReference type="ChEBI" id="CHEBI:61557"/>
        <dbReference type="ChEBI" id="CHEBI:140395"/>
        <dbReference type="EC" id="2.7.7.6"/>
    </reaction>
</comment>
<comment type="subunit">
    <text evidence="1">In plastids the minimal PEP RNA polymerase catalytic core is composed of four subunits: alpha, beta, beta', and beta''. When a (nuclear-encoded) sigma factor is associated with the core the holoenzyme is formed, which can initiate transcription (By similarity).</text>
</comment>
<comment type="subcellular location">
    <subcellularLocation>
        <location>Plastid</location>
        <location>Chloroplast</location>
    </subcellularLocation>
</comment>
<comment type="similarity">
    <text evidence="2">Belongs to the RNA polymerase alpha chain family.</text>
</comment>
<comment type="caution">
    <text evidence="2">The C-terminal domain thought to be required for interaction with some regulatory factors is missing from this protein.</text>
</comment>
<proteinExistence type="inferred from homology"/>
<sequence length="216" mass="25232">MKLVHILFVKKKSNLNSFTTVFEISLNTKYKNLFLLGNIFRQFLLGSFEGLVINEKRFYVSHTNSLYKDFYLVNEFSLLEEVLEPFYDVWTVFDNLRFKEKFSLSKRYYARLLTYGSGEINSKDIIVPSNLSLLENKSLFTLITDSLCIDVILQILSKNGSPFNGVERVNYILENSNSGNINYNKLYLDISTRYFLSPMEALFECFRKTNLALSKM</sequence>
<geneLocation type="chloroplast"/>
<keyword id="KW-0150">Chloroplast</keyword>
<keyword id="KW-0240">DNA-directed RNA polymerase</keyword>
<keyword id="KW-0548">Nucleotidyltransferase</keyword>
<keyword id="KW-0934">Plastid</keyword>
<keyword id="KW-0804">Transcription</keyword>
<keyword id="KW-0808">Transferase</keyword>
<feature type="chain" id="PRO_0000175506" description="DNA-directed RNA polymerase subunit alpha">
    <location>
        <begin position="1"/>
        <end position="216"/>
    </location>
</feature>
<name>RPOA_EUGGA</name>
<protein>
    <recommendedName>
        <fullName>DNA-directed RNA polymerase subunit alpha</fullName>
        <shortName>PEP</shortName>
        <ecNumber>2.7.7.6</ecNumber>
    </recommendedName>
    <alternativeName>
        <fullName>Plastid-encoded RNA polymerase subunit alpha</fullName>
        <shortName>RNA polymerase subunit alpha</shortName>
    </alternativeName>
</protein>
<gene>
    <name type="primary">rpoA</name>
</gene>
<dbReference type="EC" id="2.7.7.6"/>
<dbReference type="EMBL" id="AY047484">
    <property type="protein sequence ID" value="AAL83362.1"/>
    <property type="molecule type" value="Genomic_DNA"/>
</dbReference>
<dbReference type="SMR" id="Q8SL92"/>
<dbReference type="GO" id="GO:0009507">
    <property type="term" value="C:chloroplast"/>
    <property type="evidence" value="ECO:0007669"/>
    <property type="project" value="UniProtKB-SubCell"/>
</dbReference>
<dbReference type="GO" id="GO:0000428">
    <property type="term" value="C:DNA-directed RNA polymerase complex"/>
    <property type="evidence" value="ECO:0007669"/>
    <property type="project" value="UniProtKB-KW"/>
</dbReference>
<dbReference type="GO" id="GO:0005739">
    <property type="term" value="C:mitochondrion"/>
    <property type="evidence" value="ECO:0007669"/>
    <property type="project" value="GOC"/>
</dbReference>
<dbReference type="GO" id="GO:0003899">
    <property type="term" value="F:DNA-directed RNA polymerase activity"/>
    <property type="evidence" value="ECO:0007669"/>
    <property type="project" value="UniProtKB-EC"/>
</dbReference>
<dbReference type="GO" id="GO:0046983">
    <property type="term" value="F:protein dimerization activity"/>
    <property type="evidence" value="ECO:0007669"/>
    <property type="project" value="InterPro"/>
</dbReference>
<dbReference type="GO" id="GO:0006351">
    <property type="term" value="P:DNA-templated transcription"/>
    <property type="evidence" value="ECO:0007669"/>
    <property type="project" value="InterPro"/>
</dbReference>
<dbReference type="InterPro" id="IPR036603">
    <property type="entry name" value="RBP11-like"/>
</dbReference>
<dbReference type="InterPro" id="IPR036643">
    <property type="entry name" value="RNApol_insert_sf"/>
</dbReference>
<dbReference type="SUPFAM" id="SSF56553">
    <property type="entry name" value="Insert subdomain of RNA polymerase alpha subunit"/>
    <property type="match status" value="1"/>
</dbReference>
<dbReference type="SUPFAM" id="SSF55257">
    <property type="entry name" value="RBP11-like subunits of RNA polymerase"/>
    <property type="match status" value="1"/>
</dbReference>